<keyword id="KW-0963">Cytoplasm</keyword>
<keyword id="KW-1185">Reference proteome</keyword>
<keyword id="KW-0704">Schiff base</keyword>
<keyword id="KW-0784">Thiamine biosynthesis</keyword>
<keyword id="KW-0808">Transferase</keyword>
<proteinExistence type="inferred from homology"/>
<sequence length="259" mass="27963">METLQIAGKTFESRLFVGTGKFASSDLMEAAVLASQSRMVTVALKRVEIGRVEEDDMISRITRHPEITLLPNTSGVRSAKEAILAAELAREALQTNWLKLEVHPDPRYLLPDPIETLRATEELVRRGFIVLPYVQADPVLCKHLEEAGAATVMPLGAPIGSNRGLKTREMIRIIIEQSRVPVVIDAGIGAPSQAAEAMEMGADAVLVNTAIAVAEDPVSMATAFRLAVEAGRMAFEAKLGSVRSEAEASSPFTSFLNLK</sequence>
<protein>
    <recommendedName>
        <fullName evidence="1">Thiazole synthase</fullName>
        <ecNumber evidence="1">2.8.1.10</ecNumber>
    </recommendedName>
</protein>
<reference key="1">
    <citation type="journal article" date="2003" name="J. Bacteriol.">
        <title>Complete genome sequence of the oral pathogenic bacterium Porphyromonas gingivalis strain W83.</title>
        <authorList>
            <person name="Nelson K.E."/>
            <person name="Fleischmann R.D."/>
            <person name="DeBoy R.T."/>
            <person name="Paulsen I.T."/>
            <person name="Fouts D.E."/>
            <person name="Eisen J.A."/>
            <person name="Daugherty S.C."/>
            <person name="Dodson R.J."/>
            <person name="Durkin A.S."/>
            <person name="Gwinn M.L."/>
            <person name="Haft D.H."/>
            <person name="Kolonay J.F."/>
            <person name="Nelson W.C."/>
            <person name="Mason T.M."/>
            <person name="Tallon L."/>
            <person name="Gray J."/>
            <person name="Granger D."/>
            <person name="Tettelin H."/>
            <person name="Dong H."/>
            <person name="Galvin J.L."/>
            <person name="Duncan M.J."/>
            <person name="Dewhirst F.E."/>
            <person name="Fraser C.M."/>
        </authorList>
    </citation>
    <scope>NUCLEOTIDE SEQUENCE [LARGE SCALE GENOMIC DNA]</scope>
    <source>
        <strain>ATCC BAA-308 / W83</strain>
    </source>
</reference>
<accession>Q7MT73</accession>
<evidence type="ECO:0000255" key="1">
    <source>
        <dbReference type="HAMAP-Rule" id="MF_00443"/>
    </source>
</evidence>
<gene>
    <name evidence="1" type="primary">thiG</name>
    <name type="ordered locus">PG_2108</name>
</gene>
<dbReference type="EC" id="2.8.1.10" evidence="1"/>
<dbReference type="EMBL" id="AE015924">
    <property type="protein sequence ID" value="AAQ67067.1"/>
    <property type="molecule type" value="Genomic_DNA"/>
</dbReference>
<dbReference type="RefSeq" id="WP_005873775.1">
    <property type="nucleotide sequence ID" value="NC_002950.2"/>
</dbReference>
<dbReference type="SMR" id="Q7MT73"/>
<dbReference type="STRING" id="242619.PG_2108"/>
<dbReference type="EnsemblBacteria" id="AAQ67067">
    <property type="protein sequence ID" value="AAQ67067"/>
    <property type="gene ID" value="PG_2108"/>
</dbReference>
<dbReference type="KEGG" id="pgi:PG_2108"/>
<dbReference type="PATRIC" id="fig|242619.8.peg.1963"/>
<dbReference type="eggNOG" id="COG2022">
    <property type="taxonomic scope" value="Bacteria"/>
</dbReference>
<dbReference type="HOGENOM" id="CLU_062233_1_0_10"/>
<dbReference type="BioCyc" id="PGIN242619:G1G02-1979-MONOMER"/>
<dbReference type="UniPathway" id="UPA00060"/>
<dbReference type="Proteomes" id="UP000000588">
    <property type="component" value="Chromosome"/>
</dbReference>
<dbReference type="GO" id="GO:0005737">
    <property type="term" value="C:cytoplasm"/>
    <property type="evidence" value="ECO:0007669"/>
    <property type="project" value="UniProtKB-SubCell"/>
</dbReference>
<dbReference type="GO" id="GO:1990107">
    <property type="term" value="F:thiazole synthase activity"/>
    <property type="evidence" value="ECO:0007669"/>
    <property type="project" value="UniProtKB-EC"/>
</dbReference>
<dbReference type="GO" id="GO:0009229">
    <property type="term" value="P:thiamine diphosphate biosynthetic process"/>
    <property type="evidence" value="ECO:0007669"/>
    <property type="project" value="UniProtKB-UniRule"/>
</dbReference>
<dbReference type="CDD" id="cd04728">
    <property type="entry name" value="ThiG"/>
    <property type="match status" value="1"/>
</dbReference>
<dbReference type="FunFam" id="3.20.20.70:FF:000049">
    <property type="entry name" value="Thiazole synthase"/>
    <property type="match status" value="1"/>
</dbReference>
<dbReference type="Gene3D" id="3.20.20.70">
    <property type="entry name" value="Aldolase class I"/>
    <property type="match status" value="1"/>
</dbReference>
<dbReference type="HAMAP" id="MF_00443">
    <property type="entry name" value="ThiG"/>
    <property type="match status" value="1"/>
</dbReference>
<dbReference type="InterPro" id="IPR013785">
    <property type="entry name" value="Aldolase_TIM"/>
</dbReference>
<dbReference type="InterPro" id="IPR033983">
    <property type="entry name" value="Thiazole_synthase_ThiG"/>
</dbReference>
<dbReference type="InterPro" id="IPR008867">
    <property type="entry name" value="ThiG"/>
</dbReference>
<dbReference type="PANTHER" id="PTHR34266">
    <property type="entry name" value="THIAZOLE SYNTHASE"/>
    <property type="match status" value="1"/>
</dbReference>
<dbReference type="PANTHER" id="PTHR34266:SF2">
    <property type="entry name" value="THIAZOLE SYNTHASE"/>
    <property type="match status" value="1"/>
</dbReference>
<dbReference type="Pfam" id="PF05690">
    <property type="entry name" value="ThiG"/>
    <property type="match status" value="1"/>
</dbReference>
<dbReference type="SUPFAM" id="SSF110399">
    <property type="entry name" value="ThiG-like"/>
    <property type="match status" value="1"/>
</dbReference>
<feature type="chain" id="PRO_0000162840" description="Thiazole synthase">
    <location>
        <begin position="1"/>
        <end position="259"/>
    </location>
</feature>
<feature type="active site" description="Schiff-base intermediate with DXP" evidence="1">
    <location>
        <position position="99"/>
    </location>
</feature>
<feature type="binding site" evidence="1">
    <location>
        <position position="160"/>
    </location>
    <ligand>
        <name>1-deoxy-D-xylulose 5-phosphate</name>
        <dbReference type="ChEBI" id="CHEBI:57792"/>
    </ligand>
</feature>
<feature type="binding site" evidence="1">
    <location>
        <begin position="186"/>
        <end position="187"/>
    </location>
    <ligand>
        <name>1-deoxy-D-xylulose 5-phosphate</name>
        <dbReference type="ChEBI" id="CHEBI:57792"/>
    </ligand>
</feature>
<feature type="binding site" evidence="1">
    <location>
        <begin position="208"/>
        <end position="209"/>
    </location>
    <ligand>
        <name>1-deoxy-D-xylulose 5-phosphate</name>
        <dbReference type="ChEBI" id="CHEBI:57792"/>
    </ligand>
</feature>
<comment type="function">
    <text evidence="1">Catalyzes the rearrangement of 1-deoxy-D-xylulose 5-phosphate (DXP) to produce the thiazole phosphate moiety of thiamine. Sulfur is provided by the thiocarboxylate moiety of the carrier protein ThiS. In vitro, sulfur can be provided by H(2)S.</text>
</comment>
<comment type="catalytic activity">
    <reaction evidence="1">
        <text>[ThiS sulfur-carrier protein]-C-terminal-Gly-aminoethanethioate + 2-iminoacetate + 1-deoxy-D-xylulose 5-phosphate = [ThiS sulfur-carrier protein]-C-terminal Gly-Gly + 2-[(2R,5Z)-2-carboxy-4-methylthiazol-5(2H)-ylidene]ethyl phosphate + 2 H2O + H(+)</text>
        <dbReference type="Rhea" id="RHEA:26297"/>
        <dbReference type="Rhea" id="RHEA-COMP:12909"/>
        <dbReference type="Rhea" id="RHEA-COMP:19908"/>
        <dbReference type="ChEBI" id="CHEBI:15377"/>
        <dbReference type="ChEBI" id="CHEBI:15378"/>
        <dbReference type="ChEBI" id="CHEBI:57792"/>
        <dbReference type="ChEBI" id="CHEBI:62899"/>
        <dbReference type="ChEBI" id="CHEBI:77846"/>
        <dbReference type="ChEBI" id="CHEBI:90778"/>
        <dbReference type="ChEBI" id="CHEBI:232372"/>
        <dbReference type="EC" id="2.8.1.10"/>
    </reaction>
</comment>
<comment type="pathway">
    <text evidence="1">Cofactor biosynthesis; thiamine diphosphate biosynthesis.</text>
</comment>
<comment type="subunit">
    <text evidence="1">Homotetramer. Forms heterodimers with either ThiH or ThiS.</text>
</comment>
<comment type="subcellular location">
    <subcellularLocation>
        <location evidence="1">Cytoplasm</location>
    </subcellularLocation>
</comment>
<comment type="similarity">
    <text evidence="1">Belongs to the ThiG family.</text>
</comment>
<organism>
    <name type="scientific">Porphyromonas gingivalis (strain ATCC BAA-308 / W83)</name>
    <dbReference type="NCBI Taxonomy" id="242619"/>
    <lineage>
        <taxon>Bacteria</taxon>
        <taxon>Pseudomonadati</taxon>
        <taxon>Bacteroidota</taxon>
        <taxon>Bacteroidia</taxon>
        <taxon>Bacteroidales</taxon>
        <taxon>Porphyromonadaceae</taxon>
        <taxon>Porphyromonas</taxon>
    </lineage>
</organism>
<name>THIG_PORGI</name>